<dbReference type="EC" id="2.7.11.1"/>
<dbReference type="EMBL" id="D29980">
    <property type="protein sequence ID" value="BAA06250.1"/>
    <property type="molecule type" value="Genomic_DNA"/>
</dbReference>
<dbReference type="EMBL" id="U00059">
    <property type="protein sequence ID" value="AAB68860.1"/>
    <property type="molecule type" value="Genomic_DNA"/>
</dbReference>
<dbReference type="EMBL" id="BK006934">
    <property type="protein sequence ID" value="DAA06796.1"/>
    <property type="molecule type" value="Genomic_DNA"/>
</dbReference>
<dbReference type="PIR" id="S48944">
    <property type="entry name" value="S48944"/>
</dbReference>
<dbReference type="RefSeq" id="NP_011970.1">
    <property type="nucleotide sequence ID" value="NM_001179232.1"/>
</dbReference>
<dbReference type="SMR" id="P38692"/>
<dbReference type="BioGRID" id="36535">
    <property type="interactions" value="43"/>
</dbReference>
<dbReference type="DIP" id="DIP-1999N"/>
<dbReference type="FunCoup" id="P38692">
    <property type="interactions" value="427"/>
</dbReference>
<dbReference type="IntAct" id="P38692">
    <property type="interactions" value="18"/>
</dbReference>
<dbReference type="MINT" id="P38692"/>
<dbReference type="STRING" id="4932.YHR102W"/>
<dbReference type="GlyGen" id="P38692">
    <property type="glycosylation" value="8 sites, 1 O-linked glycan (5 sites)"/>
</dbReference>
<dbReference type="iPTMnet" id="P38692"/>
<dbReference type="PaxDb" id="4932-YHR102W"/>
<dbReference type="PeptideAtlas" id="P38692"/>
<dbReference type="EnsemblFungi" id="YHR102W_mRNA">
    <property type="protein sequence ID" value="YHR102W"/>
    <property type="gene ID" value="YHR102W"/>
</dbReference>
<dbReference type="GeneID" id="856502"/>
<dbReference type="KEGG" id="sce:YHR102W"/>
<dbReference type="AGR" id="SGD:S000001144"/>
<dbReference type="SGD" id="S000001144">
    <property type="gene designation" value="KIC1"/>
</dbReference>
<dbReference type="VEuPathDB" id="FungiDB:YHR102W"/>
<dbReference type="eggNOG" id="KOG0201">
    <property type="taxonomic scope" value="Eukaryota"/>
</dbReference>
<dbReference type="HOGENOM" id="CLU_009125_0_0_1"/>
<dbReference type="InParanoid" id="P38692"/>
<dbReference type="OMA" id="IMEGVYY"/>
<dbReference type="OrthoDB" id="248923at2759"/>
<dbReference type="BioCyc" id="YEAST:G3O-31147-MONOMER"/>
<dbReference type="Reactome" id="R-SCE-75153">
    <property type="pathway name" value="Apoptotic execution phase"/>
</dbReference>
<dbReference type="BioGRID-ORCS" id="856502">
    <property type="hits" value="5 hits in 13 CRISPR screens"/>
</dbReference>
<dbReference type="PRO" id="PR:P38692"/>
<dbReference type="Proteomes" id="UP000002311">
    <property type="component" value="Chromosome VIII"/>
</dbReference>
<dbReference type="RNAct" id="P38692">
    <property type="molecule type" value="protein"/>
</dbReference>
<dbReference type="GO" id="GO:0005933">
    <property type="term" value="C:cellular bud"/>
    <property type="evidence" value="ECO:0000314"/>
    <property type="project" value="SGD"/>
</dbReference>
<dbReference type="GO" id="GO:0005737">
    <property type="term" value="C:cytoplasm"/>
    <property type="evidence" value="ECO:0007005"/>
    <property type="project" value="SGD"/>
</dbReference>
<dbReference type="GO" id="GO:0000131">
    <property type="term" value="C:incipient cellular bud site"/>
    <property type="evidence" value="ECO:0000314"/>
    <property type="project" value="SGD"/>
</dbReference>
<dbReference type="GO" id="GO:0043332">
    <property type="term" value="C:mating projection tip"/>
    <property type="evidence" value="ECO:0000314"/>
    <property type="project" value="SGD"/>
</dbReference>
<dbReference type="GO" id="GO:0005524">
    <property type="term" value="F:ATP binding"/>
    <property type="evidence" value="ECO:0007669"/>
    <property type="project" value="UniProtKB-KW"/>
</dbReference>
<dbReference type="GO" id="GO:0004672">
    <property type="term" value="F:protein kinase activity"/>
    <property type="evidence" value="ECO:0000314"/>
    <property type="project" value="SGD"/>
</dbReference>
<dbReference type="GO" id="GO:0106310">
    <property type="term" value="F:protein serine kinase activity"/>
    <property type="evidence" value="ECO:0007669"/>
    <property type="project" value="RHEA"/>
</dbReference>
<dbReference type="GO" id="GO:0004674">
    <property type="term" value="F:protein serine/threonine kinase activity"/>
    <property type="evidence" value="ECO:0000318"/>
    <property type="project" value="GO_Central"/>
</dbReference>
<dbReference type="GO" id="GO:0007118">
    <property type="term" value="P:budding cell apical bud growth"/>
    <property type="evidence" value="ECO:0000315"/>
    <property type="project" value="SGD"/>
</dbReference>
<dbReference type="GO" id="GO:0031505">
    <property type="term" value="P:fungal-type cell wall organization"/>
    <property type="evidence" value="ECO:0000315"/>
    <property type="project" value="SGD"/>
</dbReference>
<dbReference type="GO" id="GO:0035556">
    <property type="term" value="P:intracellular signal transduction"/>
    <property type="evidence" value="ECO:0000318"/>
    <property type="project" value="GO_Central"/>
</dbReference>
<dbReference type="CDD" id="cd06917">
    <property type="entry name" value="STKc_NAK1_like"/>
    <property type="match status" value="1"/>
</dbReference>
<dbReference type="FunFam" id="1.10.510.10:FF:000499">
    <property type="entry name" value="Serine/threonine-protein kinase KIC1"/>
    <property type="match status" value="1"/>
</dbReference>
<dbReference type="Gene3D" id="1.10.510.10">
    <property type="entry name" value="Transferase(Phosphotransferase) domain 1"/>
    <property type="match status" value="1"/>
</dbReference>
<dbReference type="InterPro" id="IPR011009">
    <property type="entry name" value="Kinase-like_dom_sf"/>
</dbReference>
<dbReference type="InterPro" id="IPR000719">
    <property type="entry name" value="Prot_kinase_dom"/>
</dbReference>
<dbReference type="InterPro" id="IPR017441">
    <property type="entry name" value="Protein_kinase_ATP_BS"/>
</dbReference>
<dbReference type="InterPro" id="IPR008271">
    <property type="entry name" value="Ser/Thr_kinase_AS"/>
</dbReference>
<dbReference type="InterPro" id="IPR050629">
    <property type="entry name" value="STE20/SPS1-PAK"/>
</dbReference>
<dbReference type="InterPro" id="IPR035062">
    <property type="entry name" value="STK_Kic1p-like"/>
</dbReference>
<dbReference type="PANTHER" id="PTHR48012:SF10">
    <property type="entry name" value="FI20177P1"/>
    <property type="match status" value="1"/>
</dbReference>
<dbReference type="PANTHER" id="PTHR48012">
    <property type="entry name" value="STERILE20-LIKE KINASE, ISOFORM B-RELATED"/>
    <property type="match status" value="1"/>
</dbReference>
<dbReference type="Pfam" id="PF00069">
    <property type="entry name" value="Pkinase"/>
    <property type="match status" value="1"/>
</dbReference>
<dbReference type="SMART" id="SM00220">
    <property type="entry name" value="S_TKc"/>
    <property type="match status" value="1"/>
</dbReference>
<dbReference type="SUPFAM" id="SSF56112">
    <property type="entry name" value="Protein kinase-like (PK-like)"/>
    <property type="match status" value="1"/>
</dbReference>
<dbReference type="PROSITE" id="PS00107">
    <property type="entry name" value="PROTEIN_KINASE_ATP"/>
    <property type="match status" value="1"/>
</dbReference>
<dbReference type="PROSITE" id="PS50011">
    <property type="entry name" value="PROTEIN_KINASE_DOM"/>
    <property type="match status" value="1"/>
</dbReference>
<dbReference type="PROSITE" id="PS00108">
    <property type="entry name" value="PROTEIN_KINASE_ST"/>
    <property type="match status" value="1"/>
</dbReference>
<proteinExistence type="evidence at protein level"/>
<gene>
    <name type="primary">KIC1</name>
    <name type="synonym">NRK1</name>
    <name type="ordered locus">YHR102W</name>
</gene>
<evidence type="ECO:0000255" key="1">
    <source>
        <dbReference type="PROSITE-ProRule" id="PRU00159"/>
    </source>
</evidence>
<evidence type="ECO:0000255" key="2">
    <source>
        <dbReference type="PROSITE-ProRule" id="PRU10027"/>
    </source>
</evidence>
<evidence type="ECO:0000256" key="3">
    <source>
        <dbReference type="SAM" id="MobiDB-lite"/>
    </source>
</evidence>
<evidence type="ECO:0000269" key="4">
    <source>
    </source>
</evidence>
<evidence type="ECO:0000269" key="5">
    <source>
    </source>
</evidence>
<evidence type="ECO:0007744" key="6">
    <source>
    </source>
</evidence>
<reference key="1">
    <citation type="submission" date="1994-05" db="EMBL/GenBank/DDBJ databases">
        <authorList>
            <person name="Fukami Y."/>
        </authorList>
    </citation>
    <scope>NUCLEOTIDE SEQUENCE [GENOMIC DNA]</scope>
    <source>
        <strain>ATCC 64665 / S288c / DC5</strain>
    </source>
</reference>
<reference key="2">
    <citation type="journal article" date="1994" name="Science">
        <title>Complete nucleotide sequence of Saccharomyces cerevisiae chromosome VIII.</title>
        <authorList>
            <person name="Johnston M."/>
            <person name="Andrews S."/>
            <person name="Brinkman R."/>
            <person name="Cooper J."/>
            <person name="Ding H."/>
            <person name="Dover J."/>
            <person name="Du Z."/>
            <person name="Favello A."/>
            <person name="Fulton L."/>
            <person name="Gattung S."/>
            <person name="Geisel C."/>
            <person name="Kirsten J."/>
            <person name="Kucaba T."/>
            <person name="Hillier L.W."/>
            <person name="Jier M."/>
            <person name="Johnston L."/>
            <person name="Langston Y."/>
            <person name="Latreille P."/>
            <person name="Louis E.J."/>
            <person name="Macri C."/>
            <person name="Mardis E."/>
            <person name="Menezes S."/>
            <person name="Mouser L."/>
            <person name="Nhan M."/>
            <person name="Rifkin L."/>
            <person name="Riles L."/>
            <person name="St Peter H."/>
            <person name="Trevaskis E."/>
            <person name="Vaughan K."/>
            <person name="Vignati D."/>
            <person name="Wilcox L."/>
            <person name="Wohldman P."/>
            <person name="Waterston R."/>
            <person name="Wilson R."/>
            <person name="Vaudin M."/>
        </authorList>
    </citation>
    <scope>NUCLEOTIDE SEQUENCE [LARGE SCALE GENOMIC DNA]</scope>
    <source>
        <strain>ATCC 204508 / S288c</strain>
    </source>
</reference>
<reference key="3">
    <citation type="journal article" date="2014" name="G3 (Bethesda)">
        <title>The reference genome sequence of Saccharomyces cerevisiae: Then and now.</title>
        <authorList>
            <person name="Engel S.R."/>
            <person name="Dietrich F.S."/>
            <person name="Fisk D.G."/>
            <person name="Binkley G."/>
            <person name="Balakrishnan R."/>
            <person name="Costanzo M.C."/>
            <person name="Dwight S.S."/>
            <person name="Hitz B.C."/>
            <person name="Karra K."/>
            <person name="Nash R.S."/>
            <person name="Weng S."/>
            <person name="Wong E.D."/>
            <person name="Lloyd P."/>
            <person name="Skrzypek M.S."/>
            <person name="Miyasato S.R."/>
            <person name="Simison M."/>
            <person name="Cherry J.M."/>
        </authorList>
    </citation>
    <scope>GENOME REANNOTATION</scope>
    <source>
        <strain>ATCC 204508 / S288c</strain>
    </source>
</reference>
<reference key="4">
    <citation type="journal article" date="1998" name="J. Cell Biol.">
        <title>The yeast centrin, cdc31p, and the interacting protein kinase, Kic1p, are required for cell integrity.</title>
        <authorList>
            <person name="Sullivan D.S."/>
            <person name="Biggins S."/>
            <person name="Rose M.D."/>
        </authorList>
    </citation>
    <scope>INTERACTION WITH CDC31</scope>
</reference>
<reference key="5">
    <citation type="journal article" date="2003" name="Nature">
        <title>Global analysis of protein expression in yeast.</title>
        <authorList>
            <person name="Ghaemmaghami S."/>
            <person name="Huh W.-K."/>
            <person name="Bower K."/>
            <person name="Howson R.W."/>
            <person name="Belle A."/>
            <person name="Dephoure N."/>
            <person name="O'Shea E.K."/>
            <person name="Weissman J.S."/>
        </authorList>
    </citation>
    <scope>LEVEL OF PROTEIN EXPRESSION [LARGE SCALE ANALYSIS]</scope>
</reference>
<reference key="6">
    <citation type="journal article" date="2008" name="Mol. Cell. Proteomics">
        <title>A multidimensional chromatography technology for in-depth phosphoproteome analysis.</title>
        <authorList>
            <person name="Albuquerque C.P."/>
            <person name="Smolka M.B."/>
            <person name="Payne S.H."/>
            <person name="Bafna V."/>
            <person name="Eng J."/>
            <person name="Zhou H."/>
        </authorList>
    </citation>
    <scope>IDENTIFICATION BY MASS SPECTROMETRY [LARGE SCALE ANALYSIS]</scope>
</reference>
<reference key="7">
    <citation type="journal article" date="2009" name="Science">
        <title>Global analysis of Cdk1 substrate phosphorylation sites provides insights into evolution.</title>
        <authorList>
            <person name="Holt L.J."/>
            <person name="Tuch B.B."/>
            <person name="Villen J."/>
            <person name="Johnson A.D."/>
            <person name="Gygi S.P."/>
            <person name="Morgan D.O."/>
        </authorList>
    </citation>
    <scope>PHOSPHORYLATION [LARGE SCALE ANALYSIS] AT SER-735</scope>
    <scope>IDENTIFICATION BY MASS SPECTROMETRY [LARGE SCALE ANALYSIS]</scope>
</reference>
<keyword id="KW-0067">ATP-binding</keyword>
<keyword id="KW-0418">Kinase</keyword>
<keyword id="KW-0547">Nucleotide-binding</keyword>
<keyword id="KW-0597">Phosphoprotein</keyword>
<keyword id="KW-1185">Reference proteome</keyword>
<keyword id="KW-0723">Serine/threonine-protein kinase</keyword>
<keyword id="KW-0808">Transferase</keyword>
<accession>P38692</accession>
<accession>D3DL52</accession>
<organism>
    <name type="scientific">Saccharomyces cerevisiae (strain ATCC 204508 / S288c)</name>
    <name type="common">Baker's yeast</name>
    <dbReference type="NCBI Taxonomy" id="559292"/>
    <lineage>
        <taxon>Eukaryota</taxon>
        <taxon>Fungi</taxon>
        <taxon>Dikarya</taxon>
        <taxon>Ascomycota</taxon>
        <taxon>Saccharomycotina</taxon>
        <taxon>Saccharomycetes</taxon>
        <taxon>Saccharomycetales</taxon>
        <taxon>Saccharomycetaceae</taxon>
        <taxon>Saccharomyces</taxon>
    </lineage>
</organism>
<comment type="function">
    <text>Protein kinase involved in morphogenesis and cell integrity.</text>
</comment>
<comment type="catalytic activity">
    <reaction>
        <text>L-seryl-[protein] + ATP = O-phospho-L-seryl-[protein] + ADP + H(+)</text>
        <dbReference type="Rhea" id="RHEA:17989"/>
        <dbReference type="Rhea" id="RHEA-COMP:9863"/>
        <dbReference type="Rhea" id="RHEA-COMP:11604"/>
        <dbReference type="ChEBI" id="CHEBI:15378"/>
        <dbReference type="ChEBI" id="CHEBI:29999"/>
        <dbReference type="ChEBI" id="CHEBI:30616"/>
        <dbReference type="ChEBI" id="CHEBI:83421"/>
        <dbReference type="ChEBI" id="CHEBI:456216"/>
        <dbReference type="EC" id="2.7.11.1"/>
    </reaction>
</comment>
<comment type="catalytic activity">
    <reaction>
        <text>L-threonyl-[protein] + ATP = O-phospho-L-threonyl-[protein] + ADP + H(+)</text>
        <dbReference type="Rhea" id="RHEA:46608"/>
        <dbReference type="Rhea" id="RHEA-COMP:11060"/>
        <dbReference type="Rhea" id="RHEA-COMP:11605"/>
        <dbReference type="ChEBI" id="CHEBI:15378"/>
        <dbReference type="ChEBI" id="CHEBI:30013"/>
        <dbReference type="ChEBI" id="CHEBI:30616"/>
        <dbReference type="ChEBI" id="CHEBI:61977"/>
        <dbReference type="ChEBI" id="CHEBI:456216"/>
        <dbReference type="EC" id="2.7.11.1"/>
    </reaction>
</comment>
<comment type="subunit">
    <text evidence="5">Interacts with CDC31.</text>
</comment>
<comment type="interaction">
    <interactant intactId="EBI-12253">
        <id>P38692</id>
    </interactant>
    <interactant intactId="EBI-8859">
        <id>P32464</id>
        <label>HYM1</label>
    </interactant>
    <organismsDiffer>false</organismsDiffer>
    <experiments>4</experiments>
</comment>
<comment type="interaction">
    <interactant intactId="EBI-12253">
        <id>P38692</id>
    </interactant>
    <interactant intactId="EBI-17372">
        <id>Q00772</id>
        <label>SLT2</label>
    </interactant>
    <organismsDiffer>false</organismsDiffer>
    <experiments>3</experiments>
</comment>
<comment type="interaction">
    <interactant intactId="EBI-12253">
        <id>P38692</id>
    </interactant>
    <interactant intactId="EBI-30849">
        <id>Q08817</id>
        <label>SOG2</label>
    </interactant>
    <organismsDiffer>false</organismsDiffer>
    <experiments>6</experiments>
</comment>
<comment type="miscellaneous">
    <text evidence="4">Present with 1040 molecules/cell in log phase SD medium.</text>
</comment>
<comment type="similarity">
    <text evidence="1">Belongs to the protein kinase superfamily. Ser/Thr protein kinase family.</text>
</comment>
<sequence length="1080" mass="117062">MTTKPQNSKQGLAEGEMDVSSLFKRTEVIGRGKFGVVYKGYNVKTGRVYAIKVLNLDSDSDEVEDVQREIQFLASLKQISNITRYYGSYLKDTSLWIIMEHCAGGSLRSLLRPGKIDEKYIGVIMRELLVALKCIHKDNVIHRDIKAANVLITNEGNVKLCDFGVAAQVNQTSLRRQTMAGTPYWMAPEVIMEGVYYDTKVDIWSLGITTYEIATGNPPYCDVEALRAMQLIIKSKPPRLEDRSYSTSLKEFIALCLDEDPKERLSADDLLKSKFIRAHKATPTSILKELISRYLLFRDKNKNKYKIEGSIPENEPSKPSEAPKPSQNGGGDEAQKSIASNDNEIKRVNEGDVEMKWDFDSLSSSDYIIENNINLDALAEDNNEWATAQHDLFNYAYPDEDSYYFDPTSHNTRPFVYQGTTIGKGYPGTIAQNSTLNAPVTNNYTNSKYPSKMVAGTTNTSGTHTAGPMTSSKRLESKAPKQLLELFEDNEIITAENDVNTEAPKISKSISSLNAGNSSRDDFIPSISNEVNGNINNNKMRPHLPPLSSGNNYYSQSTPALPLLQTKFNKTSKGPPTSGLTTAPTSIEIEIPEELPNSALPTPASADPVLIPSTKARSSTVTAGTPSSSSSIQYKSPSNVPRRLTVSNNRPEHCPSTITNQKLGSAVASNSGISSTPNNSNNYNNNTDSENSRGSSGSNTANSTQMGITNPGNVTKLSTHKASSPSRPLFGVGTSPNRKPAGSPTQNIGHNSTHTNLAPPPTMKPMANSKDNKDILLQPLNSIPSSSTLNTISGNSSNNLTSSNYFSNEKEGSRVNGDFKRNNPNLKLQMPLPTPVVRNKLLDPNTATSQNNNGMPGSAGISTNENINQFGFNTSSASNIPVSMTPISEKHIDFGGKIKRSQSISNRKNSSASEHPLNILGSSVSGNVSGIGNNNVGSNNNSGPNNSVPLSANTGNTTIKANSTTIATSSSAAASTTAPISQQTIPSGTQFNHILSSAATAANSVNSLGFGMCPPPQSLQMEMFLDLESFLPGKQRRVDRKPQVLKELENLLQMFEEGLPCIEHALKEQLISTPIKDNEH</sequence>
<protein>
    <recommendedName>
        <fullName>Serine/threonine-protein kinase KIC1</fullName>
        <ecNumber>2.7.11.1</ecNumber>
    </recommendedName>
    <alternativeName>
        <fullName>Kinase that interacts with CDC31</fullName>
    </alternativeName>
    <alternativeName>
        <fullName>N-rich kinase 1</fullName>
    </alternativeName>
</protein>
<feature type="chain" id="PRO_0000086127" description="Serine/threonine-protein kinase KIC1">
    <location>
        <begin position="1"/>
        <end position="1080"/>
    </location>
</feature>
<feature type="domain" description="Protein kinase" evidence="1">
    <location>
        <begin position="23"/>
        <end position="276"/>
    </location>
</feature>
<feature type="region of interest" description="Disordered" evidence="3">
    <location>
        <begin position="308"/>
        <end position="347"/>
    </location>
</feature>
<feature type="region of interest" description="Disordered" evidence="3">
    <location>
        <begin position="615"/>
        <end position="760"/>
    </location>
</feature>
<feature type="region of interest" description="Disordered" evidence="3">
    <location>
        <begin position="787"/>
        <end position="831"/>
    </location>
</feature>
<feature type="region of interest" description="Disordered" evidence="3">
    <location>
        <begin position="901"/>
        <end position="956"/>
    </location>
</feature>
<feature type="compositionally biased region" description="Low complexity" evidence="3">
    <location>
        <begin position="312"/>
        <end position="326"/>
    </location>
</feature>
<feature type="compositionally biased region" description="Polar residues" evidence="3">
    <location>
        <begin position="615"/>
        <end position="626"/>
    </location>
</feature>
<feature type="compositionally biased region" description="Low complexity" evidence="3">
    <location>
        <begin position="627"/>
        <end position="638"/>
    </location>
</feature>
<feature type="compositionally biased region" description="Polar residues" evidence="3">
    <location>
        <begin position="656"/>
        <end position="673"/>
    </location>
</feature>
<feature type="compositionally biased region" description="Low complexity" evidence="3">
    <location>
        <begin position="674"/>
        <end position="689"/>
    </location>
</feature>
<feature type="compositionally biased region" description="Polar residues" evidence="3">
    <location>
        <begin position="693"/>
        <end position="726"/>
    </location>
</feature>
<feature type="compositionally biased region" description="Polar residues" evidence="3">
    <location>
        <begin position="743"/>
        <end position="756"/>
    </location>
</feature>
<feature type="compositionally biased region" description="Low complexity" evidence="3">
    <location>
        <begin position="787"/>
        <end position="807"/>
    </location>
</feature>
<feature type="compositionally biased region" description="Basic and acidic residues" evidence="3">
    <location>
        <begin position="808"/>
        <end position="821"/>
    </location>
</feature>
<feature type="compositionally biased region" description="Polar residues" evidence="3">
    <location>
        <begin position="901"/>
        <end position="913"/>
    </location>
</feature>
<feature type="compositionally biased region" description="Low complexity" evidence="3">
    <location>
        <begin position="918"/>
        <end position="956"/>
    </location>
</feature>
<feature type="active site" description="Proton acceptor" evidence="1 2">
    <location>
        <position position="144"/>
    </location>
</feature>
<feature type="binding site" evidence="1">
    <location>
        <begin position="29"/>
        <end position="37"/>
    </location>
    <ligand>
        <name>ATP</name>
        <dbReference type="ChEBI" id="CHEBI:30616"/>
    </ligand>
</feature>
<feature type="binding site" evidence="1">
    <location>
        <position position="52"/>
    </location>
    <ligand>
        <name>ATP</name>
        <dbReference type="ChEBI" id="CHEBI:30616"/>
    </ligand>
</feature>
<feature type="modified residue" description="Phosphoserine" evidence="6">
    <location>
        <position position="735"/>
    </location>
</feature>
<name>KIC1_YEAST</name>